<organism>
    <name type="scientific">Mus musculus</name>
    <name type="common">Mouse</name>
    <dbReference type="NCBI Taxonomy" id="10090"/>
    <lineage>
        <taxon>Eukaryota</taxon>
        <taxon>Metazoa</taxon>
        <taxon>Chordata</taxon>
        <taxon>Craniata</taxon>
        <taxon>Vertebrata</taxon>
        <taxon>Euteleostomi</taxon>
        <taxon>Mammalia</taxon>
        <taxon>Eutheria</taxon>
        <taxon>Euarchontoglires</taxon>
        <taxon>Glires</taxon>
        <taxon>Rodentia</taxon>
        <taxon>Myomorpha</taxon>
        <taxon>Muroidea</taxon>
        <taxon>Muridae</taxon>
        <taxon>Murinae</taxon>
        <taxon>Mus</taxon>
        <taxon>Mus</taxon>
    </lineage>
</organism>
<accession>Q9Z1L3</accession>
<accession>Q7TQH8</accession>
<accession>Q9R227</accession>
<name>DEDD_MOUSE</name>
<reference key="1">
    <citation type="journal article" date="1998" name="EMBO J.">
        <title>DEDD, a novel death effector domain-containing protein, targeted to the nucleolus.</title>
        <authorList>
            <person name="Stegh A.H."/>
            <person name="Schickling O."/>
            <person name="Ehret A."/>
            <person name="Scaffidi C."/>
            <person name="Peterhaensel C."/>
            <person name="Hofmann T.G."/>
            <person name="Grummt I."/>
            <person name="Krammer P.H."/>
            <person name="Peter M.E."/>
        </authorList>
    </citation>
    <scope>NUCLEOTIDE SEQUENCE [MRNA]</scope>
    <scope>FUNCTION</scope>
    <scope>SUBCELLULAR LOCATION</scope>
    <scope>TISSUE SPECIFICITY</scope>
</reference>
<reference key="2">
    <citation type="submission" date="1998-10" db="EMBL/GenBank/DDBJ databases">
        <title>DEDPRO1, a novel DED-containing protein.</title>
        <authorList>
            <person name="Thome M."/>
            <person name="Tschopp J."/>
        </authorList>
    </citation>
    <scope>NUCLEOTIDE SEQUENCE [MRNA]</scope>
</reference>
<reference key="3">
    <citation type="journal article" date="2004" name="Genome Res.">
        <title>The status, quality, and expansion of the NIH full-length cDNA project: the Mammalian Gene Collection (MGC).</title>
        <authorList>
            <consortium name="The MGC Project Team"/>
        </authorList>
    </citation>
    <scope>NUCLEOTIDE SEQUENCE [LARGE SCALE MRNA]</scope>
    <source>
        <strain>FVB/N-3</strain>
        <tissue>Colon</tissue>
        <tissue>Mammary gland</tissue>
    </source>
</reference>
<comment type="function">
    <text evidence="1 4">A scaffold protein that directs CASP3 to certain substrates and facilitates their ordered degradation during apoptosis. May also play a role in mediating CASP3 cleavage of KRT18. Regulates degradation of intermediate filaments during apoptosis. May play a role in the general transcription machinery in the nucleus and might be an important regulator of the activity of GTF3C3 (By similarity). Inhibits DNA transcription in vitro.</text>
</comment>
<comment type="subunit">
    <text evidence="1">Interacts with CASP8, CASP10, KRT8, KRT18, CASP3 and FADD. Homodimerizes and heterodimerizes with DEDD2 (By similarity).</text>
</comment>
<comment type="subcellular location">
    <subcellularLocation>
        <location evidence="1">Cytoplasm</location>
    </subcellularLocation>
    <subcellularLocation>
        <location evidence="1">Nucleus</location>
        <location evidence="1">Nucleolus</location>
    </subcellularLocation>
    <text evidence="1">Translocated to the nucleus during CD95-mediated apoptosis where it is localized in the nucleoli. Following apoptosis induction, the mono and/or diubiquitination form increases and forms filamentous structures that colocalize with KRT8 and KRT18 intermediate filament network in simple epithelial cells (By similarity).</text>
</comment>
<comment type="tissue specificity">
    <text evidence="4">Ubiquitously expressed.</text>
</comment>
<comment type="PTM">
    <text>Exists predominantly in a mono- or diubiquitinated form.</text>
</comment>
<evidence type="ECO:0000250" key="1"/>
<evidence type="ECO:0000255" key="2">
    <source>
        <dbReference type="PROSITE-ProRule" id="PRU00065"/>
    </source>
</evidence>
<evidence type="ECO:0000256" key="3">
    <source>
        <dbReference type="SAM" id="MobiDB-lite"/>
    </source>
</evidence>
<evidence type="ECO:0000269" key="4">
    <source>
    </source>
</evidence>
<evidence type="ECO:0000305" key="5"/>
<keyword id="KW-0053">Apoptosis</keyword>
<keyword id="KW-0963">Cytoplasm</keyword>
<keyword id="KW-0238">DNA-binding</keyword>
<keyword id="KW-0539">Nucleus</keyword>
<keyword id="KW-1185">Reference proteome</keyword>
<keyword id="KW-0678">Repressor</keyword>
<keyword id="KW-0804">Transcription</keyword>
<keyword id="KW-0805">Transcription regulation</keyword>
<keyword id="KW-0832">Ubl conjugation</keyword>
<gene>
    <name type="primary">Dedd</name>
</gene>
<sequence length="318" mass="36805">MAGLKRRASQVWPEERGEQEHGLYSLHRMFDIVGTHLTHRDVRVLSFLFVDVIDDHERGLIRNGRDFLLALERQGRCDESNFRQVLQLLRIITRHDLLPYVTLKKRRAVCPDLVDKYLEETSIRYVTPRALSDPEPRPPQPSKTVPPHYPVVCCPTSGSQMCSKRPARGRTTLGSQRKRRKSVTPDPKEKQTCDIRLRVRAEYCQHETALQGNVFSNKQDPLERQFERFNQANTILKSRDLGSIICDIKFSELTYLDAFWRDYINGSLLEALKGVFITDSLKQAVGHEAIKLLVNVDEEDYELGRQKLLRNLMLQALP</sequence>
<dbReference type="EMBL" id="AJ011386">
    <property type="protein sequence ID" value="CAA09604.1"/>
    <property type="molecule type" value="mRNA"/>
</dbReference>
<dbReference type="EMBL" id="AF100342">
    <property type="protein sequence ID" value="AAD16415.1"/>
    <property type="molecule type" value="mRNA"/>
</dbReference>
<dbReference type="EMBL" id="BC023668">
    <property type="protein sequence ID" value="AAH23668.1"/>
    <property type="molecule type" value="mRNA"/>
</dbReference>
<dbReference type="EMBL" id="BC054445">
    <property type="protein sequence ID" value="AAH54445.1"/>
    <property type="molecule type" value="mRNA"/>
</dbReference>
<dbReference type="CCDS" id="CCDS15490.1"/>
<dbReference type="RefSeq" id="NP_001122081.1">
    <property type="nucleotide sequence ID" value="NM_001128609.2"/>
</dbReference>
<dbReference type="RefSeq" id="NP_001344479.1">
    <property type="nucleotide sequence ID" value="NM_001357550.2"/>
</dbReference>
<dbReference type="RefSeq" id="NP_001344480.1">
    <property type="nucleotide sequence ID" value="NM_001357551.2"/>
</dbReference>
<dbReference type="RefSeq" id="NP_001344481.1">
    <property type="nucleotide sequence ID" value="NM_001357552.2"/>
</dbReference>
<dbReference type="RefSeq" id="NP_001344482.1">
    <property type="nucleotide sequence ID" value="NM_001357553.2"/>
</dbReference>
<dbReference type="RefSeq" id="NP_001407561.1">
    <property type="nucleotide sequence ID" value="NM_001420632.1"/>
</dbReference>
<dbReference type="RefSeq" id="NP_001407562.1">
    <property type="nucleotide sequence ID" value="NM_001420633.1"/>
</dbReference>
<dbReference type="RefSeq" id="NP_001407563.1">
    <property type="nucleotide sequence ID" value="NM_001420634.1"/>
</dbReference>
<dbReference type="RefSeq" id="NP_001407564.1">
    <property type="nucleotide sequence ID" value="NM_001420635.1"/>
</dbReference>
<dbReference type="RefSeq" id="NP_001407565.1">
    <property type="nucleotide sequence ID" value="NM_001420636.1"/>
</dbReference>
<dbReference type="RefSeq" id="NP_001407566.1">
    <property type="nucleotide sequence ID" value="NM_001420637.1"/>
</dbReference>
<dbReference type="RefSeq" id="NP_001407567.1">
    <property type="nucleotide sequence ID" value="NM_001420638.1"/>
</dbReference>
<dbReference type="RefSeq" id="NP_035745.3">
    <property type="nucleotide sequence ID" value="NM_011615.3"/>
</dbReference>
<dbReference type="RefSeq" id="XP_006496801.1">
    <property type="nucleotide sequence ID" value="XM_006496738.3"/>
</dbReference>
<dbReference type="RefSeq" id="XP_006496802.1">
    <property type="nucleotide sequence ID" value="XM_006496739.4"/>
</dbReference>
<dbReference type="RefSeq" id="XP_006496803.1">
    <property type="nucleotide sequence ID" value="XM_006496740.3"/>
</dbReference>
<dbReference type="RefSeq" id="XP_006496804.1">
    <property type="nucleotide sequence ID" value="XM_006496741.3"/>
</dbReference>
<dbReference type="RefSeq" id="XP_011237084.1">
    <property type="nucleotide sequence ID" value="XM_011238782.2"/>
</dbReference>
<dbReference type="BioGRID" id="204257">
    <property type="interactions" value="1"/>
</dbReference>
<dbReference type="FunCoup" id="Q9Z1L3">
    <property type="interactions" value="3068"/>
</dbReference>
<dbReference type="IntAct" id="Q9Z1L3">
    <property type="interactions" value="1"/>
</dbReference>
<dbReference type="STRING" id="10090.ENSMUSP00000106931"/>
<dbReference type="GlyGen" id="Q9Z1L3">
    <property type="glycosylation" value="1 site"/>
</dbReference>
<dbReference type="iPTMnet" id="Q9Z1L3"/>
<dbReference type="PhosphoSitePlus" id="Q9Z1L3"/>
<dbReference type="PaxDb" id="10090-ENSMUSP00000106931"/>
<dbReference type="ProteomicsDB" id="279331"/>
<dbReference type="Antibodypedia" id="34292">
    <property type="antibodies" value="232 antibodies from 33 providers"/>
</dbReference>
<dbReference type="DNASU" id="21945"/>
<dbReference type="Ensembl" id="ENSMUST00000064950.11">
    <property type="protein sequence ID" value="ENSMUSP00000068419.5"/>
    <property type="gene ID" value="ENSMUSG00000013973.13"/>
</dbReference>
<dbReference type="Ensembl" id="ENSMUST00000097467.8">
    <property type="protein sequence ID" value="ENSMUSP00000095075.2"/>
    <property type="gene ID" value="ENSMUSG00000013973.13"/>
</dbReference>
<dbReference type="Ensembl" id="ENSMUST00000111299.8">
    <property type="protein sequence ID" value="ENSMUSP00000106930.2"/>
    <property type="gene ID" value="ENSMUSG00000013973.13"/>
</dbReference>
<dbReference type="Ensembl" id="ENSMUST00000111300.8">
    <property type="protein sequence ID" value="ENSMUSP00000106931.2"/>
    <property type="gene ID" value="ENSMUSG00000013973.13"/>
</dbReference>
<dbReference type="GeneID" id="21945"/>
<dbReference type="KEGG" id="mmu:21945"/>
<dbReference type="UCSC" id="uc007dnx.2">
    <property type="organism name" value="mouse"/>
</dbReference>
<dbReference type="AGR" id="MGI:1333874"/>
<dbReference type="CTD" id="9191"/>
<dbReference type="MGI" id="MGI:1333874">
    <property type="gene designation" value="Dedd"/>
</dbReference>
<dbReference type="VEuPathDB" id="HostDB:ENSMUSG00000013973"/>
<dbReference type="eggNOG" id="ENOG502QRWB">
    <property type="taxonomic scope" value="Eukaryota"/>
</dbReference>
<dbReference type="GeneTree" id="ENSGT00390000008714"/>
<dbReference type="HOGENOM" id="CLU_053869_0_0_1"/>
<dbReference type="InParanoid" id="Q9Z1L3"/>
<dbReference type="OMA" id="CKDAVAH"/>
<dbReference type="OrthoDB" id="6422954at2759"/>
<dbReference type="PhylomeDB" id="Q9Z1L3"/>
<dbReference type="TreeFam" id="TF331807"/>
<dbReference type="BioGRID-ORCS" id="21945">
    <property type="hits" value="3 hits in 75 CRISPR screens"/>
</dbReference>
<dbReference type="ChiTaRS" id="Dedd">
    <property type="organism name" value="mouse"/>
</dbReference>
<dbReference type="PRO" id="PR:Q9Z1L3"/>
<dbReference type="Proteomes" id="UP000000589">
    <property type="component" value="Chromosome 1"/>
</dbReference>
<dbReference type="RNAct" id="Q9Z1L3">
    <property type="molecule type" value="protein"/>
</dbReference>
<dbReference type="Bgee" id="ENSMUSG00000013973">
    <property type="expression patterns" value="Expressed in primary oocyte and 251 other cell types or tissues"/>
</dbReference>
<dbReference type="ExpressionAtlas" id="Q9Z1L3">
    <property type="expression patterns" value="baseline and differential"/>
</dbReference>
<dbReference type="GO" id="GO:0005737">
    <property type="term" value="C:cytoplasm"/>
    <property type="evidence" value="ECO:0000314"/>
    <property type="project" value="UniProtKB"/>
</dbReference>
<dbReference type="GO" id="GO:0005730">
    <property type="term" value="C:nucleolus"/>
    <property type="evidence" value="ECO:0000314"/>
    <property type="project" value="UniProtKB"/>
</dbReference>
<dbReference type="GO" id="GO:0003677">
    <property type="term" value="F:DNA binding"/>
    <property type="evidence" value="ECO:0000314"/>
    <property type="project" value="UniProtKB"/>
</dbReference>
<dbReference type="GO" id="GO:0046697">
    <property type="term" value="P:decidualization"/>
    <property type="evidence" value="ECO:0000315"/>
    <property type="project" value="MGI"/>
</dbReference>
<dbReference type="GO" id="GO:0008625">
    <property type="term" value="P:extrinsic apoptotic signaling pathway via death domain receptors"/>
    <property type="evidence" value="ECO:0000314"/>
    <property type="project" value="MGI"/>
</dbReference>
<dbReference type="GO" id="GO:0042177">
    <property type="term" value="P:negative regulation of protein catabolic process"/>
    <property type="evidence" value="ECO:0000315"/>
    <property type="project" value="MGI"/>
</dbReference>
<dbReference type="GO" id="GO:1901837">
    <property type="term" value="P:negative regulation of transcription of nucleolar large rRNA by RNA polymerase I"/>
    <property type="evidence" value="ECO:0000314"/>
    <property type="project" value="MGI"/>
</dbReference>
<dbReference type="GO" id="GO:0042981">
    <property type="term" value="P:regulation of apoptotic process"/>
    <property type="evidence" value="ECO:0007669"/>
    <property type="project" value="InterPro"/>
</dbReference>
<dbReference type="GO" id="GO:0007283">
    <property type="term" value="P:spermatogenesis"/>
    <property type="evidence" value="ECO:0007669"/>
    <property type="project" value="Ensembl"/>
</dbReference>
<dbReference type="CDD" id="cd08790">
    <property type="entry name" value="DED_DEDD"/>
    <property type="match status" value="1"/>
</dbReference>
<dbReference type="FunFam" id="1.10.533.10:FF:000004">
    <property type="entry name" value="Death effector domain-containing protein-like"/>
    <property type="match status" value="1"/>
</dbReference>
<dbReference type="Gene3D" id="1.10.533.10">
    <property type="entry name" value="Death Domain, Fas"/>
    <property type="match status" value="1"/>
</dbReference>
<dbReference type="InterPro" id="IPR011029">
    <property type="entry name" value="DEATH-like_dom_sf"/>
</dbReference>
<dbReference type="InterPro" id="IPR001875">
    <property type="entry name" value="DED_dom"/>
</dbReference>
<dbReference type="InterPro" id="IPR038856">
    <property type="entry name" value="DEDD/DEDD2"/>
</dbReference>
<dbReference type="InterPro" id="IPR049341">
    <property type="entry name" value="TRADD-like_N"/>
</dbReference>
<dbReference type="PANTHER" id="PTHR15205">
    <property type="entry name" value="DEATH EFFECTOR DOMAIN-CONTAINING PROTEIN"/>
    <property type="match status" value="1"/>
</dbReference>
<dbReference type="PANTHER" id="PTHR15205:SF2">
    <property type="entry name" value="DEATH EFFECTOR DOMAIN-CONTAINING PROTEIN"/>
    <property type="match status" value="1"/>
</dbReference>
<dbReference type="Pfam" id="PF01335">
    <property type="entry name" value="DED"/>
    <property type="match status" value="1"/>
</dbReference>
<dbReference type="Pfam" id="PF20694">
    <property type="entry name" value="TRADD-like_N"/>
    <property type="match status" value="1"/>
</dbReference>
<dbReference type="SMART" id="SM00031">
    <property type="entry name" value="DED"/>
    <property type="match status" value="1"/>
</dbReference>
<dbReference type="SUPFAM" id="SSF47986">
    <property type="entry name" value="DEATH domain"/>
    <property type="match status" value="1"/>
</dbReference>
<dbReference type="PROSITE" id="PS50168">
    <property type="entry name" value="DED"/>
    <property type="match status" value="1"/>
</dbReference>
<feature type="chain" id="PRO_0000191275" description="Death effector domain-containing protein">
    <location>
        <begin position="1"/>
        <end position="318"/>
    </location>
</feature>
<feature type="domain" description="DED" evidence="2">
    <location>
        <begin position="25"/>
        <end position="103"/>
    </location>
</feature>
<feature type="region of interest" description="Disordered" evidence="3">
    <location>
        <begin position="128"/>
        <end position="191"/>
    </location>
</feature>
<feature type="sequence conflict" description="In Ref. 2; AAD16415." evidence="5" ref="2">
    <original>K</original>
    <variation>N</variation>
    <location>
        <position position="237"/>
    </location>
</feature>
<feature type="sequence conflict" description="In Ref. 3; AAH54445." evidence="5" ref="3">
    <original>A</original>
    <variation>V</variation>
    <location>
        <position position="316"/>
    </location>
</feature>
<protein>
    <recommendedName>
        <fullName>Death effector domain-containing protein</fullName>
    </recommendedName>
    <alternativeName>
        <fullName>DEDPro1</fullName>
    </alternativeName>
</protein>
<proteinExistence type="evidence at transcript level"/>